<gene>
    <name evidence="1" type="primary">pcp</name>
    <name type="ordered locus">YN1551_2531</name>
</gene>
<comment type="function">
    <text evidence="1">Removes 5-oxoproline from various penultimate amino acid residues except L-proline.</text>
</comment>
<comment type="catalytic activity">
    <reaction evidence="1">
        <text>Release of an N-terminal pyroglutamyl group from a polypeptide, the second amino acid generally not being Pro.</text>
        <dbReference type="EC" id="3.4.19.3"/>
    </reaction>
</comment>
<comment type="subunit">
    <text evidence="1">Homotetramer.</text>
</comment>
<comment type="subcellular location">
    <subcellularLocation>
        <location evidence="1">Cytoplasm</location>
    </subcellularLocation>
</comment>
<comment type="similarity">
    <text evidence="1">Belongs to the peptidase C15 family.</text>
</comment>
<organism>
    <name type="scientific">Saccharolobus islandicus (strain Y.N.15.51 / Yellowstone #2)</name>
    <name type="common">Sulfolobus islandicus</name>
    <dbReference type="NCBI Taxonomy" id="419942"/>
    <lineage>
        <taxon>Archaea</taxon>
        <taxon>Thermoproteota</taxon>
        <taxon>Thermoprotei</taxon>
        <taxon>Sulfolobales</taxon>
        <taxon>Sulfolobaceae</taxon>
        <taxon>Saccharolobus</taxon>
    </lineage>
</organism>
<feature type="chain" id="PRO_1000206027" description="Pyrrolidone-carboxylate peptidase">
    <location>
        <begin position="1"/>
        <end position="209"/>
    </location>
</feature>
<feature type="active site" evidence="1">
    <location>
        <position position="79"/>
    </location>
</feature>
<feature type="active site" evidence="1">
    <location>
        <position position="142"/>
    </location>
</feature>
<feature type="active site" evidence="1">
    <location>
        <position position="164"/>
    </location>
</feature>
<sequence>MTVLLFGFEPFLEYKENPSQLIAEALNGSTILKEEVKGVILPVEYEKIEDLIVTKIREMKPILTLGIGVAPGRAKITPEKIAINYKYSREGDNAGKKYKGEKIDPLGQDGIFTNIPVEDLVDLLNENGIPAELSLSAGSYLCNNAMYIIIREARKYNSLGGFIHVPLHESYAARIQRPIPSMSLDTMIRGIRLSMEFILTNKKENLTFS</sequence>
<proteinExistence type="inferred from homology"/>
<dbReference type="EC" id="3.4.19.3" evidence="1"/>
<dbReference type="EMBL" id="CP001404">
    <property type="protein sequence ID" value="ACP49477.1"/>
    <property type="molecule type" value="Genomic_DNA"/>
</dbReference>
<dbReference type="RefSeq" id="WP_012715634.1">
    <property type="nucleotide sequence ID" value="NC_012623.1"/>
</dbReference>
<dbReference type="SMR" id="C3NL04"/>
<dbReference type="MEROPS" id="C15.001"/>
<dbReference type="GeneID" id="7810241"/>
<dbReference type="KEGG" id="sin:YN1551_2531"/>
<dbReference type="HOGENOM" id="CLU_043960_4_3_2"/>
<dbReference type="Proteomes" id="UP000006818">
    <property type="component" value="Chromosome"/>
</dbReference>
<dbReference type="GO" id="GO:0005829">
    <property type="term" value="C:cytosol"/>
    <property type="evidence" value="ECO:0007669"/>
    <property type="project" value="InterPro"/>
</dbReference>
<dbReference type="GO" id="GO:0016920">
    <property type="term" value="F:pyroglutamyl-peptidase activity"/>
    <property type="evidence" value="ECO:0007669"/>
    <property type="project" value="UniProtKB-UniRule"/>
</dbReference>
<dbReference type="GO" id="GO:0006508">
    <property type="term" value="P:proteolysis"/>
    <property type="evidence" value="ECO:0007669"/>
    <property type="project" value="UniProtKB-KW"/>
</dbReference>
<dbReference type="CDD" id="cd00501">
    <property type="entry name" value="Peptidase_C15"/>
    <property type="match status" value="1"/>
</dbReference>
<dbReference type="FunFam" id="3.40.630.20:FF:000005">
    <property type="entry name" value="Pyrrolidone-carboxylate peptidase"/>
    <property type="match status" value="1"/>
</dbReference>
<dbReference type="Gene3D" id="3.40.630.20">
    <property type="entry name" value="Peptidase C15, pyroglutamyl peptidase I-like"/>
    <property type="match status" value="1"/>
</dbReference>
<dbReference type="HAMAP" id="MF_00417">
    <property type="entry name" value="Pyrrolid_peptidase"/>
    <property type="match status" value="1"/>
</dbReference>
<dbReference type="InterPro" id="IPR000816">
    <property type="entry name" value="Peptidase_C15"/>
</dbReference>
<dbReference type="InterPro" id="IPR016125">
    <property type="entry name" value="Peptidase_C15-like"/>
</dbReference>
<dbReference type="InterPro" id="IPR036440">
    <property type="entry name" value="Peptidase_C15-like_sf"/>
</dbReference>
<dbReference type="InterPro" id="IPR029762">
    <property type="entry name" value="PGP-I_bact-type"/>
</dbReference>
<dbReference type="InterPro" id="IPR033694">
    <property type="entry name" value="PGPEP1_Cys_AS"/>
</dbReference>
<dbReference type="InterPro" id="IPR033693">
    <property type="entry name" value="PGPEP1_Glu_AS"/>
</dbReference>
<dbReference type="NCBIfam" id="NF009672">
    <property type="entry name" value="PRK13193.1"/>
    <property type="match status" value="1"/>
</dbReference>
<dbReference type="PANTHER" id="PTHR23402">
    <property type="entry name" value="PROTEASE FAMILY C15 PYROGLUTAMYL-PEPTIDASE I-RELATED"/>
    <property type="match status" value="1"/>
</dbReference>
<dbReference type="PANTHER" id="PTHR23402:SF1">
    <property type="entry name" value="PYROGLUTAMYL-PEPTIDASE I"/>
    <property type="match status" value="1"/>
</dbReference>
<dbReference type="Pfam" id="PF01470">
    <property type="entry name" value="Peptidase_C15"/>
    <property type="match status" value="1"/>
</dbReference>
<dbReference type="PIRSF" id="PIRSF015592">
    <property type="entry name" value="Prld-crbxl_pptds"/>
    <property type="match status" value="1"/>
</dbReference>
<dbReference type="PRINTS" id="PR00706">
    <property type="entry name" value="PYROGLUPTASE"/>
</dbReference>
<dbReference type="SUPFAM" id="SSF53182">
    <property type="entry name" value="Pyrrolidone carboxyl peptidase (pyroglutamate aminopeptidase)"/>
    <property type="match status" value="1"/>
</dbReference>
<dbReference type="PROSITE" id="PS01334">
    <property type="entry name" value="PYRASE_CYS"/>
    <property type="match status" value="1"/>
</dbReference>
<dbReference type="PROSITE" id="PS01333">
    <property type="entry name" value="PYRASE_GLU"/>
    <property type="match status" value="1"/>
</dbReference>
<protein>
    <recommendedName>
        <fullName evidence="1">Pyrrolidone-carboxylate peptidase</fullName>
        <ecNumber evidence="1">3.4.19.3</ecNumber>
    </recommendedName>
    <alternativeName>
        <fullName evidence="1">5-oxoprolyl-peptidase</fullName>
    </alternativeName>
    <alternativeName>
        <fullName evidence="1">Pyroglutamyl-peptidase I</fullName>
        <shortName evidence="1">PGP-I</shortName>
        <shortName evidence="1">Pyrase</shortName>
    </alternativeName>
</protein>
<accession>C3NL04</accession>
<reference key="1">
    <citation type="journal article" date="2009" name="Proc. Natl. Acad. Sci. U.S.A.">
        <title>Biogeography of the Sulfolobus islandicus pan-genome.</title>
        <authorList>
            <person name="Reno M.L."/>
            <person name="Held N.L."/>
            <person name="Fields C.J."/>
            <person name="Burke P.V."/>
            <person name="Whitaker R.J."/>
        </authorList>
    </citation>
    <scope>NUCLEOTIDE SEQUENCE [LARGE SCALE GENOMIC DNA]</scope>
    <source>
        <strain>Y.N.15.51 / Yellowstone #2</strain>
    </source>
</reference>
<evidence type="ECO:0000255" key="1">
    <source>
        <dbReference type="HAMAP-Rule" id="MF_00417"/>
    </source>
</evidence>
<name>PCP_SACI1</name>
<keyword id="KW-0963">Cytoplasm</keyword>
<keyword id="KW-0378">Hydrolase</keyword>
<keyword id="KW-0645">Protease</keyword>
<keyword id="KW-0788">Thiol protease</keyword>